<keyword id="KW-0028">Amino-acid biosynthesis</keyword>
<keyword id="KW-0368">Histidine biosynthesis</keyword>
<keyword id="KW-0378">Hydrolase</keyword>
<keyword id="KW-0486">Methionine biosynthesis</keyword>
<keyword id="KW-0511">Multifunctional enzyme</keyword>
<keyword id="KW-0521">NADP</keyword>
<keyword id="KW-0554">One-carbon metabolism</keyword>
<keyword id="KW-0560">Oxidoreductase</keyword>
<keyword id="KW-0658">Purine biosynthesis</keyword>
<proteinExistence type="inferred from homology"/>
<feature type="chain" id="PRO_0000268302" description="Bifunctional protein FolD">
    <location>
        <begin position="1"/>
        <end position="285"/>
    </location>
</feature>
<feature type="binding site" evidence="1">
    <location>
        <begin position="165"/>
        <end position="167"/>
    </location>
    <ligand>
        <name>NADP(+)</name>
        <dbReference type="ChEBI" id="CHEBI:58349"/>
    </ligand>
</feature>
<feature type="binding site" evidence="1">
    <location>
        <position position="190"/>
    </location>
    <ligand>
        <name>NADP(+)</name>
        <dbReference type="ChEBI" id="CHEBI:58349"/>
    </ligand>
</feature>
<evidence type="ECO:0000255" key="1">
    <source>
        <dbReference type="HAMAP-Rule" id="MF_01576"/>
    </source>
</evidence>
<gene>
    <name evidence="1" type="primary">folD</name>
    <name type="ordered locus">BTH_I1861</name>
</gene>
<name>FOLD_BURTA</name>
<sequence length="285" mass="29911">MTATLIDGNALSKTLRAQAAKRAAALAARGHRPGLAVILVGDNPASEVYVRNKIKACEDNGFFSLKDRYPATLSEPELLARIGELNRDPKIHGILVQLPLPAHIDSHKVIEAIAPEKDVDGFHVANAGALLTGKPLFRPCTPYGVMKMFEAYKIPLQGANAVVIGRSNIVGKPMALLLLEAGATVTICHSKTRDLAAHTREADIVVAAVGKRNVLTADMVKPGATVIDVGMNRNDEGKLCGDVDFAGVSQVAGHITPVPGGVGPMTITMLLVNTIEAAERAAAAA</sequence>
<organism>
    <name type="scientific">Burkholderia thailandensis (strain ATCC 700388 / DSM 13276 / CCUG 48851 / CIP 106301 / E264)</name>
    <dbReference type="NCBI Taxonomy" id="271848"/>
    <lineage>
        <taxon>Bacteria</taxon>
        <taxon>Pseudomonadati</taxon>
        <taxon>Pseudomonadota</taxon>
        <taxon>Betaproteobacteria</taxon>
        <taxon>Burkholderiales</taxon>
        <taxon>Burkholderiaceae</taxon>
        <taxon>Burkholderia</taxon>
        <taxon>pseudomallei group</taxon>
    </lineage>
</organism>
<reference key="1">
    <citation type="journal article" date="2005" name="BMC Genomics">
        <title>Bacterial genome adaptation to niches: divergence of the potential virulence genes in three Burkholderia species of different survival strategies.</title>
        <authorList>
            <person name="Kim H.S."/>
            <person name="Schell M.A."/>
            <person name="Yu Y."/>
            <person name="Ulrich R.L."/>
            <person name="Sarria S.H."/>
            <person name="Nierman W.C."/>
            <person name="DeShazer D."/>
        </authorList>
    </citation>
    <scope>NUCLEOTIDE SEQUENCE [LARGE SCALE GENOMIC DNA]</scope>
    <source>
        <strain>ATCC 700388 / DSM 13276 / CCUG 48851 / CIP 106301 / E264</strain>
    </source>
</reference>
<dbReference type="EC" id="1.5.1.5" evidence="1"/>
<dbReference type="EC" id="3.5.4.9" evidence="1"/>
<dbReference type="EMBL" id="CP000086">
    <property type="protein sequence ID" value="ABC38033.1"/>
    <property type="molecule type" value="Genomic_DNA"/>
</dbReference>
<dbReference type="RefSeq" id="WP_009890151.1">
    <property type="nucleotide sequence ID" value="NC_007651.1"/>
</dbReference>
<dbReference type="SMR" id="Q2SXF8"/>
<dbReference type="GeneID" id="45121593"/>
<dbReference type="KEGG" id="bte:BTH_I1861"/>
<dbReference type="HOGENOM" id="CLU_034045_2_1_4"/>
<dbReference type="UniPathway" id="UPA00193"/>
<dbReference type="Proteomes" id="UP000001930">
    <property type="component" value="Chromosome I"/>
</dbReference>
<dbReference type="GO" id="GO:0005829">
    <property type="term" value="C:cytosol"/>
    <property type="evidence" value="ECO:0007669"/>
    <property type="project" value="TreeGrafter"/>
</dbReference>
<dbReference type="GO" id="GO:0004477">
    <property type="term" value="F:methenyltetrahydrofolate cyclohydrolase activity"/>
    <property type="evidence" value="ECO:0007669"/>
    <property type="project" value="UniProtKB-UniRule"/>
</dbReference>
<dbReference type="GO" id="GO:0004488">
    <property type="term" value="F:methylenetetrahydrofolate dehydrogenase (NADP+) activity"/>
    <property type="evidence" value="ECO:0007669"/>
    <property type="project" value="UniProtKB-UniRule"/>
</dbReference>
<dbReference type="GO" id="GO:0000105">
    <property type="term" value="P:L-histidine biosynthetic process"/>
    <property type="evidence" value="ECO:0007669"/>
    <property type="project" value="UniProtKB-KW"/>
</dbReference>
<dbReference type="GO" id="GO:0009086">
    <property type="term" value="P:methionine biosynthetic process"/>
    <property type="evidence" value="ECO:0007669"/>
    <property type="project" value="UniProtKB-KW"/>
</dbReference>
<dbReference type="GO" id="GO:0006164">
    <property type="term" value="P:purine nucleotide biosynthetic process"/>
    <property type="evidence" value="ECO:0007669"/>
    <property type="project" value="UniProtKB-KW"/>
</dbReference>
<dbReference type="GO" id="GO:0035999">
    <property type="term" value="P:tetrahydrofolate interconversion"/>
    <property type="evidence" value="ECO:0007669"/>
    <property type="project" value="UniProtKB-UniRule"/>
</dbReference>
<dbReference type="CDD" id="cd01080">
    <property type="entry name" value="NAD_bind_m-THF_DH_Cyclohyd"/>
    <property type="match status" value="1"/>
</dbReference>
<dbReference type="FunFam" id="3.40.50.720:FF:000094">
    <property type="entry name" value="Bifunctional protein FolD"/>
    <property type="match status" value="1"/>
</dbReference>
<dbReference type="FunFam" id="3.40.50.10860:FF:000005">
    <property type="entry name" value="C-1-tetrahydrofolate synthase, cytoplasmic, putative"/>
    <property type="match status" value="1"/>
</dbReference>
<dbReference type="Gene3D" id="3.40.50.10860">
    <property type="entry name" value="Leucine Dehydrogenase, chain A, domain 1"/>
    <property type="match status" value="1"/>
</dbReference>
<dbReference type="Gene3D" id="3.40.50.720">
    <property type="entry name" value="NAD(P)-binding Rossmann-like Domain"/>
    <property type="match status" value="1"/>
</dbReference>
<dbReference type="HAMAP" id="MF_01576">
    <property type="entry name" value="THF_DHG_CYH"/>
    <property type="match status" value="1"/>
</dbReference>
<dbReference type="InterPro" id="IPR046346">
    <property type="entry name" value="Aminoacid_DH-like_N_sf"/>
</dbReference>
<dbReference type="InterPro" id="IPR036291">
    <property type="entry name" value="NAD(P)-bd_dom_sf"/>
</dbReference>
<dbReference type="InterPro" id="IPR000672">
    <property type="entry name" value="THF_DH/CycHdrlase"/>
</dbReference>
<dbReference type="InterPro" id="IPR020630">
    <property type="entry name" value="THF_DH/CycHdrlase_cat_dom"/>
</dbReference>
<dbReference type="InterPro" id="IPR020867">
    <property type="entry name" value="THF_DH/CycHdrlase_CS"/>
</dbReference>
<dbReference type="InterPro" id="IPR020631">
    <property type="entry name" value="THF_DH/CycHdrlase_NAD-bd_dom"/>
</dbReference>
<dbReference type="NCBIfam" id="NF008058">
    <property type="entry name" value="PRK10792.1"/>
    <property type="match status" value="1"/>
</dbReference>
<dbReference type="NCBIfam" id="NF010783">
    <property type="entry name" value="PRK14186.1"/>
    <property type="match status" value="1"/>
</dbReference>
<dbReference type="NCBIfam" id="NF010786">
    <property type="entry name" value="PRK14189.1"/>
    <property type="match status" value="1"/>
</dbReference>
<dbReference type="PANTHER" id="PTHR48099:SF5">
    <property type="entry name" value="C-1-TETRAHYDROFOLATE SYNTHASE, CYTOPLASMIC"/>
    <property type="match status" value="1"/>
</dbReference>
<dbReference type="PANTHER" id="PTHR48099">
    <property type="entry name" value="C-1-TETRAHYDROFOLATE SYNTHASE, CYTOPLASMIC-RELATED"/>
    <property type="match status" value="1"/>
</dbReference>
<dbReference type="Pfam" id="PF00763">
    <property type="entry name" value="THF_DHG_CYH"/>
    <property type="match status" value="1"/>
</dbReference>
<dbReference type="Pfam" id="PF02882">
    <property type="entry name" value="THF_DHG_CYH_C"/>
    <property type="match status" value="1"/>
</dbReference>
<dbReference type="PRINTS" id="PR00085">
    <property type="entry name" value="THFDHDRGNASE"/>
</dbReference>
<dbReference type="SUPFAM" id="SSF53223">
    <property type="entry name" value="Aminoacid dehydrogenase-like, N-terminal domain"/>
    <property type="match status" value="1"/>
</dbReference>
<dbReference type="SUPFAM" id="SSF51735">
    <property type="entry name" value="NAD(P)-binding Rossmann-fold domains"/>
    <property type="match status" value="1"/>
</dbReference>
<dbReference type="PROSITE" id="PS00766">
    <property type="entry name" value="THF_DHG_CYH_1"/>
    <property type="match status" value="1"/>
</dbReference>
<dbReference type="PROSITE" id="PS00767">
    <property type="entry name" value="THF_DHG_CYH_2"/>
    <property type="match status" value="1"/>
</dbReference>
<protein>
    <recommendedName>
        <fullName evidence="1">Bifunctional protein FolD</fullName>
    </recommendedName>
    <domain>
        <recommendedName>
            <fullName evidence="1">Methylenetetrahydrofolate dehydrogenase</fullName>
            <ecNumber evidence="1">1.5.1.5</ecNumber>
        </recommendedName>
    </domain>
    <domain>
        <recommendedName>
            <fullName evidence="1">Methenyltetrahydrofolate cyclohydrolase</fullName>
            <ecNumber evidence="1">3.5.4.9</ecNumber>
        </recommendedName>
    </domain>
</protein>
<comment type="function">
    <text evidence="1">Catalyzes the oxidation of 5,10-methylenetetrahydrofolate to 5,10-methenyltetrahydrofolate and then the hydrolysis of 5,10-methenyltetrahydrofolate to 10-formyltetrahydrofolate.</text>
</comment>
<comment type="catalytic activity">
    <reaction evidence="1">
        <text>(6R)-5,10-methylene-5,6,7,8-tetrahydrofolate + NADP(+) = (6R)-5,10-methenyltetrahydrofolate + NADPH</text>
        <dbReference type="Rhea" id="RHEA:22812"/>
        <dbReference type="ChEBI" id="CHEBI:15636"/>
        <dbReference type="ChEBI" id="CHEBI:57455"/>
        <dbReference type="ChEBI" id="CHEBI:57783"/>
        <dbReference type="ChEBI" id="CHEBI:58349"/>
        <dbReference type="EC" id="1.5.1.5"/>
    </reaction>
</comment>
<comment type="catalytic activity">
    <reaction evidence="1">
        <text>(6R)-5,10-methenyltetrahydrofolate + H2O = (6R)-10-formyltetrahydrofolate + H(+)</text>
        <dbReference type="Rhea" id="RHEA:23700"/>
        <dbReference type="ChEBI" id="CHEBI:15377"/>
        <dbReference type="ChEBI" id="CHEBI:15378"/>
        <dbReference type="ChEBI" id="CHEBI:57455"/>
        <dbReference type="ChEBI" id="CHEBI:195366"/>
        <dbReference type="EC" id="3.5.4.9"/>
    </reaction>
</comment>
<comment type="pathway">
    <text evidence="1">One-carbon metabolism; tetrahydrofolate interconversion.</text>
</comment>
<comment type="subunit">
    <text evidence="1">Homodimer.</text>
</comment>
<comment type="similarity">
    <text evidence="1">Belongs to the tetrahydrofolate dehydrogenase/cyclohydrolase family.</text>
</comment>
<accession>Q2SXF8</accession>